<name>DDL_ALBFT</name>
<evidence type="ECO:0000250" key="1"/>
<evidence type="ECO:0000255" key="2">
    <source>
        <dbReference type="HAMAP-Rule" id="MF_00047"/>
    </source>
</evidence>
<organism>
    <name type="scientific">Albidiferax ferrireducens (strain ATCC BAA-621 / DSM 15236 / T118)</name>
    <name type="common">Rhodoferax ferrireducens</name>
    <dbReference type="NCBI Taxonomy" id="338969"/>
    <lineage>
        <taxon>Bacteria</taxon>
        <taxon>Pseudomonadati</taxon>
        <taxon>Pseudomonadota</taxon>
        <taxon>Betaproteobacteria</taxon>
        <taxon>Burkholderiales</taxon>
        <taxon>Comamonadaceae</taxon>
        <taxon>Rhodoferax</taxon>
    </lineage>
</organism>
<proteinExistence type="inferred from homology"/>
<sequence>MSQIGINDGASQQPAGTTLGGVAARLGKVAVLMGGASAEREVSLMSGQGVLQALISQGVDAHAFDPAERDLAELKVEGFSHCFIALHGRFGEDGTVQGALELLGIPYTGSGVMASSIAIDKVMTKRIWRSEGLPTPEWRQVDSAAATSEAFAALGSPMIVKPDREGSTIGLTKVTQIEQCGAAYALAARHDAMVLCEQFVKGDEVTIPLLGSGAGAHALPVIRIVAPDGNYDYQNKYFTDTTQYLVPANLPAGEEAHIQQLALKAYQVLGCRGWARVDVMIDARTRAPFLLEINTSPGMTPHSLVPMAAKAAGVSYPALCLEVLRHATLDYAAAGGDAQQPSTEPA</sequence>
<feature type="chain" id="PRO_0000341165" description="D-alanine--D-alanine ligase">
    <location>
        <begin position="1"/>
        <end position="346"/>
    </location>
</feature>
<feature type="domain" description="ATP-grasp" evidence="2">
    <location>
        <begin position="125"/>
        <end position="325"/>
    </location>
</feature>
<feature type="binding site" evidence="2">
    <location>
        <begin position="151"/>
        <end position="206"/>
    </location>
    <ligand>
        <name>ATP</name>
        <dbReference type="ChEBI" id="CHEBI:30616"/>
    </ligand>
</feature>
<feature type="binding site" evidence="2">
    <location>
        <position position="278"/>
    </location>
    <ligand>
        <name>Mg(2+)</name>
        <dbReference type="ChEBI" id="CHEBI:18420"/>
        <label>1</label>
    </ligand>
</feature>
<feature type="binding site" evidence="2">
    <location>
        <position position="292"/>
    </location>
    <ligand>
        <name>Mg(2+)</name>
        <dbReference type="ChEBI" id="CHEBI:18420"/>
        <label>1</label>
    </ligand>
</feature>
<feature type="binding site" evidence="2">
    <location>
        <position position="292"/>
    </location>
    <ligand>
        <name>Mg(2+)</name>
        <dbReference type="ChEBI" id="CHEBI:18420"/>
        <label>2</label>
    </ligand>
</feature>
<feature type="binding site" evidence="2">
    <location>
        <position position="294"/>
    </location>
    <ligand>
        <name>Mg(2+)</name>
        <dbReference type="ChEBI" id="CHEBI:18420"/>
        <label>2</label>
    </ligand>
</feature>
<reference key="1">
    <citation type="submission" date="2006-02" db="EMBL/GenBank/DDBJ databases">
        <title>Complete sequence of chromosome of Rhodoferax ferrireducens DSM 15236.</title>
        <authorList>
            <person name="Copeland A."/>
            <person name="Lucas S."/>
            <person name="Lapidus A."/>
            <person name="Barry K."/>
            <person name="Detter J.C."/>
            <person name="Glavina del Rio T."/>
            <person name="Hammon N."/>
            <person name="Israni S."/>
            <person name="Pitluck S."/>
            <person name="Brettin T."/>
            <person name="Bruce D."/>
            <person name="Han C."/>
            <person name="Tapia R."/>
            <person name="Gilna P."/>
            <person name="Kiss H."/>
            <person name="Schmutz J."/>
            <person name="Larimer F."/>
            <person name="Land M."/>
            <person name="Kyrpides N."/>
            <person name="Ivanova N."/>
            <person name="Richardson P."/>
        </authorList>
    </citation>
    <scope>NUCLEOTIDE SEQUENCE [LARGE SCALE GENOMIC DNA]</scope>
    <source>
        <strain>ATCC BAA-621 / DSM 15236 / T118</strain>
    </source>
</reference>
<dbReference type="EC" id="6.3.2.4" evidence="2"/>
<dbReference type="EMBL" id="CP000267">
    <property type="protein sequence ID" value="ABD71132.1"/>
    <property type="molecule type" value="Genomic_DNA"/>
</dbReference>
<dbReference type="RefSeq" id="WP_011465695.1">
    <property type="nucleotide sequence ID" value="NC_007908.1"/>
</dbReference>
<dbReference type="SMR" id="Q21SX1"/>
<dbReference type="STRING" id="338969.Rfer_3423"/>
<dbReference type="KEGG" id="rfr:Rfer_3423"/>
<dbReference type="eggNOG" id="COG1181">
    <property type="taxonomic scope" value="Bacteria"/>
</dbReference>
<dbReference type="HOGENOM" id="CLU_039268_1_2_4"/>
<dbReference type="OrthoDB" id="9813261at2"/>
<dbReference type="UniPathway" id="UPA00219"/>
<dbReference type="Proteomes" id="UP000008332">
    <property type="component" value="Chromosome"/>
</dbReference>
<dbReference type="GO" id="GO:0005829">
    <property type="term" value="C:cytosol"/>
    <property type="evidence" value="ECO:0007669"/>
    <property type="project" value="TreeGrafter"/>
</dbReference>
<dbReference type="GO" id="GO:0005524">
    <property type="term" value="F:ATP binding"/>
    <property type="evidence" value="ECO:0007669"/>
    <property type="project" value="UniProtKB-KW"/>
</dbReference>
<dbReference type="GO" id="GO:0008716">
    <property type="term" value="F:D-alanine-D-alanine ligase activity"/>
    <property type="evidence" value="ECO:0007669"/>
    <property type="project" value="UniProtKB-UniRule"/>
</dbReference>
<dbReference type="GO" id="GO:0046872">
    <property type="term" value="F:metal ion binding"/>
    <property type="evidence" value="ECO:0007669"/>
    <property type="project" value="UniProtKB-KW"/>
</dbReference>
<dbReference type="GO" id="GO:0071555">
    <property type="term" value="P:cell wall organization"/>
    <property type="evidence" value="ECO:0007669"/>
    <property type="project" value="UniProtKB-KW"/>
</dbReference>
<dbReference type="GO" id="GO:0009252">
    <property type="term" value="P:peptidoglycan biosynthetic process"/>
    <property type="evidence" value="ECO:0007669"/>
    <property type="project" value="UniProtKB-UniRule"/>
</dbReference>
<dbReference type="GO" id="GO:0008360">
    <property type="term" value="P:regulation of cell shape"/>
    <property type="evidence" value="ECO:0007669"/>
    <property type="project" value="UniProtKB-KW"/>
</dbReference>
<dbReference type="FunFam" id="3.30.470.20:FF:000008">
    <property type="entry name" value="D-alanine--D-alanine ligase"/>
    <property type="match status" value="1"/>
</dbReference>
<dbReference type="FunFam" id="3.40.50.20:FF:000013">
    <property type="entry name" value="D-alanine--D-alanine ligase"/>
    <property type="match status" value="1"/>
</dbReference>
<dbReference type="Gene3D" id="3.40.50.20">
    <property type="match status" value="1"/>
</dbReference>
<dbReference type="Gene3D" id="3.30.1490.20">
    <property type="entry name" value="ATP-grasp fold, A domain"/>
    <property type="match status" value="1"/>
</dbReference>
<dbReference type="Gene3D" id="3.30.470.20">
    <property type="entry name" value="ATP-grasp fold, B domain"/>
    <property type="match status" value="1"/>
</dbReference>
<dbReference type="HAMAP" id="MF_00047">
    <property type="entry name" value="Dala_Dala_lig"/>
    <property type="match status" value="1"/>
</dbReference>
<dbReference type="InterPro" id="IPR011761">
    <property type="entry name" value="ATP-grasp"/>
</dbReference>
<dbReference type="InterPro" id="IPR013815">
    <property type="entry name" value="ATP_grasp_subdomain_1"/>
</dbReference>
<dbReference type="InterPro" id="IPR000291">
    <property type="entry name" value="D-Ala_lig_Van_CS"/>
</dbReference>
<dbReference type="InterPro" id="IPR005905">
    <property type="entry name" value="D_ala_D_ala"/>
</dbReference>
<dbReference type="InterPro" id="IPR011095">
    <property type="entry name" value="Dala_Dala_lig_C"/>
</dbReference>
<dbReference type="InterPro" id="IPR011127">
    <property type="entry name" value="Dala_Dala_lig_N"/>
</dbReference>
<dbReference type="InterPro" id="IPR016185">
    <property type="entry name" value="PreATP-grasp_dom_sf"/>
</dbReference>
<dbReference type="NCBIfam" id="TIGR01205">
    <property type="entry name" value="D_ala_D_alaTIGR"/>
    <property type="match status" value="1"/>
</dbReference>
<dbReference type="NCBIfam" id="NF002378">
    <property type="entry name" value="PRK01372.1"/>
    <property type="match status" value="1"/>
</dbReference>
<dbReference type="PANTHER" id="PTHR23132">
    <property type="entry name" value="D-ALANINE--D-ALANINE LIGASE"/>
    <property type="match status" value="1"/>
</dbReference>
<dbReference type="PANTHER" id="PTHR23132:SF23">
    <property type="entry name" value="D-ALANINE--D-ALANINE LIGASE B"/>
    <property type="match status" value="1"/>
</dbReference>
<dbReference type="Pfam" id="PF07478">
    <property type="entry name" value="Dala_Dala_lig_C"/>
    <property type="match status" value="1"/>
</dbReference>
<dbReference type="Pfam" id="PF01820">
    <property type="entry name" value="Dala_Dala_lig_N"/>
    <property type="match status" value="1"/>
</dbReference>
<dbReference type="PIRSF" id="PIRSF039102">
    <property type="entry name" value="Ddl/VanB"/>
    <property type="match status" value="1"/>
</dbReference>
<dbReference type="SUPFAM" id="SSF56059">
    <property type="entry name" value="Glutathione synthetase ATP-binding domain-like"/>
    <property type="match status" value="1"/>
</dbReference>
<dbReference type="SUPFAM" id="SSF52440">
    <property type="entry name" value="PreATP-grasp domain"/>
    <property type="match status" value="1"/>
</dbReference>
<dbReference type="PROSITE" id="PS50975">
    <property type="entry name" value="ATP_GRASP"/>
    <property type="match status" value="1"/>
</dbReference>
<dbReference type="PROSITE" id="PS00843">
    <property type="entry name" value="DALA_DALA_LIGASE_1"/>
    <property type="match status" value="1"/>
</dbReference>
<dbReference type="PROSITE" id="PS00844">
    <property type="entry name" value="DALA_DALA_LIGASE_2"/>
    <property type="match status" value="1"/>
</dbReference>
<accession>Q21SX1</accession>
<gene>
    <name evidence="2" type="primary">ddl</name>
    <name type="ordered locus">Rfer_3423</name>
</gene>
<comment type="function">
    <text evidence="2">Cell wall formation.</text>
</comment>
<comment type="catalytic activity">
    <reaction evidence="2">
        <text>2 D-alanine + ATP = D-alanyl-D-alanine + ADP + phosphate + H(+)</text>
        <dbReference type="Rhea" id="RHEA:11224"/>
        <dbReference type="ChEBI" id="CHEBI:15378"/>
        <dbReference type="ChEBI" id="CHEBI:30616"/>
        <dbReference type="ChEBI" id="CHEBI:43474"/>
        <dbReference type="ChEBI" id="CHEBI:57416"/>
        <dbReference type="ChEBI" id="CHEBI:57822"/>
        <dbReference type="ChEBI" id="CHEBI:456216"/>
        <dbReference type="EC" id="6.3.2.4"/>
    </reaction>
</comment>
<comment type="cofactor">
    <cofactor evidence="1">
        <name>Mg(2+)</name>
        <dbReference type="ChEBI" id="CHEBI:18420"/>
    </cofactor>
    <cofactor evidence="1">
        <name>Mn(2+)</name>
        <dbReference type="ChEBI" id="CHEBI:29035"/>
    </cofactor>
    <text evidence="1">Binds 2 magnesium or manganese ions per subunit.</text>
</comment>
<comment type="pathway">
    <text evidence="2">Cell wall biogenesis; peptidoglycan biosynthesis.</text>
</comment>
<comment type="subcellular location">
    <subcellularLocation>
        <location evidence="2">Cytoplasm</location>
    </subcellularLocation>
</comment>
<comment type="similarity">
    <text evidence="2">Belongs to the D-alanine--D-alanine ligase family.</text>
</comment>
<keyword id="KW-0067">ATP-binding</keyword>
<keyword id="KW-0133">Cell shape</keyword>
<keyword id="KW-0961">Cell wall biogenesis/degradation</keyword>
<keyword id="KW-0963">Cytoplasm</keyword>
<keyword id="KW-0436">Ligase</keyword>
<keyword id="KW-0460">Magnesium</keyword>
<keyword id="KW-0464">Manganese</keyword>
<keyword id="KW-0479">Metal-binding</keyword>
<keyword id="KW-0547">Nucleotide-binding</keyword>
<keyword id="KW-0573">Peptidoglycan synthesis</keyword>
<keyword id="KW-1185">Reference proteome</keyword>
<protein>
    <recommendedName>
        <fullName evidence="2">D-alanine--D-alanine ligase</fullName>
        <ecNumber evidence="2">6.3.2.4</ecNumber>
    </recommendedName>
    <alternativeName>
        <fullName evidence="2">D-Ala-D-Ala ligase</fullName>
    </alternativeName>
    <alternativeName>
        <fullName evidence="2">D-alanylalanine synthetase</fullName>
    </alternativeName>
</protein>